<gene>
    <name type="primary">AMT1-2</name>
    <name type="ordered locus">At1g64780</name>
    <name type="ORF">F13O11.9</name>
</gene>
<sequence length="514" mass="55014">MDTATTTCSAVDLSALLSSSSNSTSSLAAATFLCSQISNISNKLSDTTYAVDNTYLLFSAYLVFAMQLGFAMLCAGSVRAKNTMNIMLTNVLDAAAGAISYYLFGFAFAFGTPSNGFIGRHHSFFALSSYPERPGSDFSFFLYQWAFAIAAAGITSGSIAERTQFVAYLIYSTFLTGFVYPTVSHWFWSSDGWASASRSDNNLLFGSGAIDFAGSGVVHMVGGIAGLCGALVEGPRIGRFDRSGRSVALRGHSASLVVLGTFLLWFGWYGFNPGSFLTILKGYDKSRPYYGQWSAVGRTAVTTTLSGCTAALTTLFSKRLLAGHWNVIDVCNGLLGGFAAITSGCAVVEPWAAIVCGFVASWVLIGFNLLAKKLKYDDPLEAAQLHGGCGAWGLIFTGLFARKEYVNEIYSGDRPYGLFMGGGGKLLAAQIVQIIVIVGWVTVTMGPLFYGLHKMNLLRISAEDEMAGMDMTRHGGFAYAYNDEDDVSTKPWGHFAGRVEPTSRSSTPTPTLTV</sequence>
<dbReference type="EMBL" id="AF083036">
    <property type="protein sequence ID" value="AAD54639.1"/>
    <property type="molecule type" value="mRNA"/>
</dbReference>
<dbReference type="EMBL" id="AF110771">
    <property type="protein sequence ID" value="AAD17001.1"/>
    <property type="molecule type" value="mRNA"/>
</dbReference>
<dbReference type="EMBL" id="AC006193">
    <property type="protein sequence ID" value="AAD38253.1"/>
    <property type="molecule type" value="Genomic_DNA"/>
</dbReference>
<dbReference type="EMBL" id="CP002684">
    <property type="protein sequence ID" value="AEE34288.1"/>
    <property type="molecule type" value="Genomic_DNA"/>
</dbReference>
<dbReference type="EMBL" id="AY062571">
    <property type="protein sequence ID" value="AAL32649.1"/>
    <property type="molecule type" value="mRNA"/>
</dbReference>
<dbReference type="EMBL" id="AY093374">
    <property type="protein sequence ID" value="AAM13373.1"/>
    <property type="molecule type" value="mRNA"/>
</dbReference>
<dbReference type="PIR" id="A96671">
    <property type="entry name" value="A96671"/>
</dbReference>
<dbReference type="SMR" id="Q9ZPJ8"/>
<dbReference type="BioGRID" id="28007">
    <property type="interactions" value="8"/>
</dbReference>
<dbReference type="FunCoup" id="Q9ZPJ8">
    <property type="interactions" value="37"/>
</dbReference>
<dbReference type="IntAct" id="Q9ZPJ8">
    <property type="interactions" value="1"/>
</dbReference>
<dbReference type="STRING" id="3702.Q9ZPJ8"/>
<dbReference type="iPTMnet" id="Q9ZPJ8"/>
<dbReference type="PaxDb" id="3702-AT1G64780.1"/>
<dbReference type="ProteomicsDB" id="240319"/>
<dbReference type="EnsemblPlants" id="AT1G64780.1">
    <property type="protein sequence ID" value="AT1G64780.1"/>
    <property type="gene ID" value="AT1G64780"/>
</dbReference>
<dbReference type="Gramene" id="AT1G64780.1">
    <property type="protein sequence ID" value="AT1G64780.1"/>
    <property type="gene ID" value="AT1G64780"/>
</dbReference>
<dbReference type="KEGG" id="ath:AT1G64780"/>
<dbReference type="Araport" id="AT1G64780"/>
<dbReference type="TAIR" id="AT1G64780">
    <property type="gene designation" value="AMT1"/>
</dbReference>
<dbReference type="eggNOG" id="KOG0682">
    <property type="taxonomic scope" value="Eukaryota"/>
</dbReference>
<dbReference type="HOGENOM" id="CLU_000445_33_1_1"/>
<dbReference type="InParanoid" id="Q9ZPJ8"/>
<dbReference type="OMA" id="CAGSDVM"/>
<dbReference type="OrthoDB" id="534912at2759"/>
<dbReference type="PhylomeDB" id="Q9ZPJ8"/>
<dbReference type="PRO" id="PR:Q9ZPJ8"/>
<dbReference type="Proteomes" id="UP000006548">
    <property type="component" value="Chromosome 1"/>
</dbReference>
<dbReference type="ExpressionAtlas" id="Q9ZPJ8">
    <property type="expression patterns" value="baseline and differential"/>
</dbReference>
<dbReference type="GO" id="GO:0005886">
    <property type="term" value="C:plasma membrane"/>
    <property type="evidence" value="ECO:0000314"/>
    <property type="project" value="TAIR"/>
</dbReference>
<dbReference type="GO" id="GO:0008519">
    <property type="term" value="F:ammonium channel activity"/>
    <property type="evidence" value="ECO:0007669"/>
    <property type="project" value="InterPro"/>
</dbReference>
<dbReference type="GO" id="GO:0015843">
    <property type="term" value="P:methylammonium transport"/>
    <property type="evidence" value="ECO:0000315"/>
    <property type="project" value="TAIR"/>
</dbReference>
<dbReference type="GO" id="GO:0009624">
    <property type="term" value="P:response to nematode"/>
    <property type="evidence" value="ECO:0007007"/>
    <property type="project" value="TAIR"/>
</dbReference>
<dbReference type="FunFam" id="1.10.3430.10:FF:000006">
    <property type="entry name" value="Ammonium transporter"/>
    <property type="match status" value="1"/>
</dbReference>
<dbReference type="Gene3D" id="1.10.3430.10">
    <property type="entry name" value="Ammonium transporter AmtB like domains"/>
    <property type="match status" value="1"/>
</dbReference>
<dbReference type="InterPro" id="IPR029020">
    <property type="entry name" value="Ammonium/urea_transptr"/>
</dbReference>
<dbReference type="InterPro" id="IPR001905">
    <property type="entry name" value="Ammonium_transpt"/>
</dbReference>
<dbReference type="InterPro" id="IPR018047">
    <property type="entry name" value="Ammonium_transpt_CS"/>
</dbReference>
<dbReference type="InterPro" id="IPR024041">
    <property type="entry name" value="NH4_transpt_AmtB-like_dom"/>
</dbReference>
<dbReference type="NCBIfam" id="TIGR00836">
    <property type="entry name" value="amt"/>
    <property type="match status" value="1"/>
</dbReference>
<dbReference type="PANTHER" id="PTHR11730">
    <property type="entry name" value="AMMONIUM TRANSPORTER"/>
    <property type="match status" value="1"/>
</dbReference>
<dbReference type="PANTHER" id="PTHR11730:SF6">
    <property type="entry name" value="AMMONIUM TRANSPORTER"/>
    <property type="match status" value="1"/>
</dbReference>
<dbReference type="Pfam" id="PF00909">
    <property type="entry name" value="Ammonium_transp"/>
    <property type="match status" value="1"/>
</dbReference>
<dbReference type="SUPFAM" id="SSF111352">
    <property type="entry name" value="Ammonium transporter"/>
    <property type="match status" value="1"/>
</dbReference>
<dbReference type="PROSITE" id="PS01219">
    <property type="entry name" value="AMMONIUM_TRANSP"/>
    <property type="match status" value="1"/>
</dbReference>
<proteinExistence type="evidence at protein level"/>
<feature type="chain" id="PRO_0000139744" description="Ammonium transporter 1 member 2">
    <location>
        <begin position="1"/>
        <end position="514"/>
    </location>
</feature>
<feature type="transmembrane region" description="Helical" evidence="1">
    <location>
        <begin position="56"/>
        <end position="76"/>
    </location>
</feature>
<feature type="transmembrane region" description="Helical" evidence="1">
    <location>
        <begin position="91"/>
        <end position="111"/>
    </location>
</feature>
<feature type="transmembrane region" description="Helical" evidence="1">
    <location>
        <begin position="140"/>
        <end position="160"/>
    </location>
</feature>
<feature type="transmembrane region" description="Helical" evidence="1">
    <location>
        <begin position="165"/>
        <end position="185"/>
    </location>
</feature>
<feature type="transmembrane region" description="Helical" evidence="1">
    <location>
        <begin position="212"/>
        <end position="232"/>
    </location>
</feature>
<feature type="transmembrane region" description="Helical" evidence="1">
    <location>
        <begin position="257"/>
        <end position="277"/>
    </location>
</feature>
<feature type="transmembrane region" description="Helical" evidence="1">
    <location>
        <begin position="291"/>
        <end position="313"/>
    </location>
</feature>
<feature type="transmembrane region" description="Helical" evidence="1">
    <location>
        <begin position="328"/>
        <end position="348"/>
    </location>
</feature>
<feature type="transmembrane region" description="Helical" evidence="1">
    <location>
        <begin position="351"/>
        <end position="371"/>
    </location>
</feature>
<feature type="transmembrane region" description="Helical" evidence="1">
    <location>
        <begin position="380"/>
        <end position="400"/>
    </location>
</feature>
<feature type="transmembrane region" description="Helical" evidence="1">
    <location>
        <begin position="431"/>
        <end position="451"/>
    </location>
</feature>
<feature type="modified residue" description="Phosphothreonine" evidence="4">
    <location>
        <position position="472"/>
    </location>
</feature>
<feature type="sequence conflict" description="In Ref. 1; AAD54639." evidence="3" ref="1">
    <original>R</original>
    <variation>G</variation>
    <location>
        <position position="198"/>
    </location>
</feature>
<feature type="sequence conflict" description="In Ref. 1; AAD54639." evidence="3" ref="1">
    <original>A</original>
    <variation>S</variation>
    <location>
        <position position="310"/>
    </location>
</feature>
<feature type="sequence conflict" description="In Ref. 1; AAD54639." evidence="3" ref="1">
    <original>V</original>
    <variation>I</variation>
    <location>
        <position position="438"/>
    </location>
</feature>
<evidence type="ECO:0000255" key="1"/>
<evidence type="ECO:0000269" key="2">
    <source>
    </source>
</evidence>
<evidence type="ECO:0000305" key="3"/>
<evidence type="ECO:0007744" key="4">
    <source>
    </source>
</evidence>
<name>AMT12_ARATH</name>
<organism>
    <name type="scientific">Arabidopsis thaliana</name>
    <name type="common">Mouse-ear cress</name>
    <dbReference type="NCBI Taxonomy" id="3702"/>
    <lineage>
        <taxon>Eukaryota</taxon>
        <taxon>Viridiplantae</taxon>
        <taxon>Streptophyta</taxon>
        <taxon>Embryophyta</taxon>
        <taxon>Tracheophyta</taxon>
        <taxon>Spermatophyta</taxon>
        <taxon>Magnoliopsida</taxon>
        <taxon>eudicotyledons</taxon>
        <taxon>Gunneridae</taxon>
        <taxon>Pentapetalae</taxon>
        <taxon>rosids</taxon>
        <taxon>malvids</taxon>
        <taxon>Brassicales</taxon>
        <taxon>Brassicaceae</taxon>
        <taxon>Camelineae</taxon>
        <taxon>Arabidopsis</taxon>
    </lineage>
</organism>
<comment type="function">
    <text evidence="2">Ammonium transporter probably involved in ammonium uptake from the soil.</text>
</comment>
<comment type="subcellular location">
    <subcellularLocation>
        <location evidence="3">Membrane</location>
        <topology evidence="3">Multi-pass membrane protein</topology>
    </subcellularLocation>
</comment>
<comment type="tissue specificity">
    <text evidence="2">High expression in root.</text>
</comment>
<comment type="similarity">
    <text evidence="3">Belongs to the ammonia transporter channel (TC 1.A.11.2) family.</text>
</comment>
<keyword id="KW-0924">Ammonia transport</keyword>
<keyword id="KW-0472">Membrane</keyword>
<keyword id="KW-0597">Phosphoprotein</keyword>
<keyword id="KW-1185">Reference proteome</keyword>
<keyword id="KW-0812">Transmembrane</keyword>
<keyword id="KW-1133">Transmembrane helix</keyword>
<keyword id="KW-0813">Transport</keyword>
<reference key="1">
    <citation type="journal article" date="1999" name="Plant Cell">
        <title>Three functional transporters for constitutive, diurnally regulated, and starvation-induced uptake of ammonium into Arabidopsis roots.</title>
        <authorList>
            <person name="Gazzarrini S."/>
            <person name="Lejay L."/>
            <person name="Gojon A."/>
            <person name="Ninnemann O."/>
            <person name="Frommer W.B."/>
            <person name="von Wiren N."/>
        </authorList>
    </citation>
    <scope>NUCLEOTIDE SEQUENCE [MRNA]</scope>
    <scope>FUNCTION</scope>
    <scope>TISSUE SPECIFICITY</scope>
    <source>
        <strain>cv. C24</strain>
        <tissue>Seed</tissue>
    </source>
</reference>
<reference key="2">
    <citation type="submission" date="1998-12" db="EMBL/GenBank/DDBJ databases">
        <title>Arabidopsis thaliana AtAMT1;2 from N-deprived roots.</title>
        <authorList>
            <person name="Shelden M.C."/>
            <person name="Howitt S.M."/>
            <person name="Udvardi M.K."/>
        </authorList>
    </citation>
    <scope>NUCLEOTIDE SEQUENCE [MRNA]</scope>
    <source>
        <strain>cv. C24</strain>
        <tissue>Root</tissue>
    </source>
</reference>
<reference key="3">
    <citation type="journal article" date="2000" name="Nature">
        <title>Sequence and analysis of chromosome 1 of the plant Arabidopsis thaliana.</title>
        <authorList>
            <person name="Theologis A."/>
            <person name="Ecker J.R."/>
            <person name="Palm C.J."/>
            <person name="Federspiel N.A."/>
            <person name="Kaul S."/>
            <person name="White O."/>
            <person name="Alonso J."/>
            <person name="Altafi H."/>
            <person name="Araujo R."/>
            <person name="Bowman C.L."/>
            <person name="Brooks S.Y."/>
            <person name="Buehler E."/>
            <person name="Chan A."/>
            <person name="Chao Q."/>
            <person name="Chen H."/>
            <person name="Cheuk R.F."/>
            <person name="Chin C.W."/>
            <person name="Chung M.K."/>
            <person name="Conn L."/>
            <person name="Conway A.B."/>
            <person name="Conway A.R."/>
            <person name="Creasy T.H."/>
            <person name="Dewar K."/>
            <person name="Dunn P."/>
            <person name="Etgu P."/>
            <person name="Feldblyum T.V."/>
            <person name="Feng J.-D."/>
            <person name="Fong B."/>
            <person name="Fujii C.Y."/>
            <person name="Gill J.E."/>
            <person name="Goldsmith A.D."/>
            <person name="Haas B."/>
            <person name="Hansen N.F."/>
            <person name="Hughes B."/>
            <person name="Huizar L."/>
            <person name="Hunter J.L."/>
            <person name="Jenkins J."/>
            <person name="Johnson-Hopson C."/>
            <person name="Khan S."/>
            <person name="Khaykin E."/>
            <person name="Kim C.J."/>
            <person name="Koo H.L."/>
            <person name="Kremenetskaia I."/>
            <person name="Kurtz D.B."/>
            <person name="Kwan A."/>
            <person name="Lam B."/>
            <person name="Langin-Hooper S."/>
            <person name="Lee A."/>
            <person name="Lee J.M."/>
            <person name="Lenz C.A."/>
            <person name="Li J.H."/>
            <person name="Li Y.-P."/>
            <person name="Lin X."/>
            <person name="Liu S.X."/>
            <person name="Liu Z.A."/>
            <person name="Luros J.S."/>
            <person name="Maiti R."/>
            <person name="Marziali A."/>
            <person name="Militscher J."/>
            <person name="Miranda M."/>
            <person name="Nguyen M."/>
            <person name="Nierman W.C."/>
            <person name="Osborne B.I."/>
            <person name="Pai G."/>
            <person name="Peterson J."/>
            <person name="Pham P.K."/>
            <person name="Rizzo M."/>
            <person name="Rooney T."/>
            <person name="Rowley D."/>
            <person name="Sakano H."/>
            <person name="Salzberg S.L."/>
            <person name="Schwartz J.R."/>
            <person name="Shinn P."/>
            <person name="Southwick A.M."/>
            <person name="Sun H."/>
            <person name="Tallon L.J."/>
            <person name="Tambunga G."/>
            <person name="Toriumi M.J."/>
            <person name="Town C.D."/>
            <person name="Utterback T."/>
            <person name="Van Aken S."/>
            <person name="Vaysberg M."/>
            <person name="Vysotskaia V.S."/>
            <person name="Walker M."/>
            <person name="Wu D."/>
            <person name="Yu G."/>
            <person name="Fraser C.M."/>
            <person name="Venter J.C."/>
            <person name="Davis R.W."/>
        </authorList>
    </citation>
    <scope>NUCLEOTIDE SEQUENCE [LARGE SCALE GENOMIC DNA]</scope>
    <source>
        <strain>cv. Columbia</strain>
    </source>
</reference>
<reference key="4">
    <citation type="journal article" date="2017" name="Plant J.">
        <title>Araport11: a complete reannotation of the Arabidopsis thaliana reference genome.</title>
        <authorList>
            <person name="Cheng C.Y."/>
            <person name="Krishnakumar V."/>
            <person name="Chan A.P."/>
            <person name="Thibaud-Nissen F."/>
            <person name="Schobel S."/>
            <person name="Town C.D."/>
        </authorList>
    </citation>
    <scope>GENOME REANNOTATION</scope>
    <source>
        <strain>cv. Columbia</strain>
    </source>
</reference>
<reference key="5">
    <citation type="journal article" date="2003" name="Science">
        <title>Empirical analysis of transcriptional activity in the Arabidopsis genome.</title>
        <authorList>
            <person name="Yamada K."/>
            <person name="Lim J."/>
            <person name="Dale J.M."/>
            <person name="Chen H."/>
            <person name="Shinn P."/>
            <person name="Palm C.J."/>
            <person name="Southwick A.M."/>
            <person name="Wu H.C."/>
            <person name="Kim C.J."/>
            <person name="Nguyen M."/>
            <person name="Pham P.K."/>
            <person name="Cheuk R.F."/>
            <person name="Karlin-Newmann G."/>
            <person name="Liu S.X."/>
            <person name="Lam B."/>
            <person name="Sakano H."/>
            <person name="Wu T."/>
            <person name="Yu G."/>
            <person name="Miranda M."/>
            <person name="Quach H.L."/>
            <person name="Tripp M."/>
            <person name="Chang C.H."/>
            <person name="Lee J.M."/>
            <person name="Toriumi M.J."/>
            <person name="Chan M.M."/>
            <person name="Tang C.C."/>
            <person name="Onodera C.S."/>
            <person name="Deng J.M."/>
            <person name="Akiyama K."/>
            <person name="Ansari Y."/>
            <person name="Arakawa T."/>
            <person name="Banh J."/>
            <person name="Banno F."/>
            <person name="Bowser L."/>
            <person name="Brooks S.Y."/>
            <person name="Carninci P."/>
            <person name="Chao Q."/>
            <person name="Choy N."/>
            <person name="Enju A."/>
            <person name="Goldsmith A.D."/>
            <person name="Gurjal M."/>
            <person name="Hansen N.F."/>
            <person name="Hayashizaki Y."/>
            <person name="Johnson-Hopson C."/>
            <person name="Hsuan V.W."/>
            <person name="Iida K."/>
            <person name="Karnes M."/>
            <person name="Khan S."/>
            <person name="Koesema E."/>
            <person name="Ishida J."/>
            <person name="Jiang P.X."/>
            <person name="Jones T."/>
            <person name="Kawai J."/>
            <person name="Kamiya A."/>
            <person name="Meyers C."/>
            <person name="Nakajima M."/>
            <person name="Narusaka M."/>
            <person name="Seki M."/>
            <person name="Sakurai T."/>
            <person name="Satou M."/>
            <person name="Tamse R."/>
            <person name="Vaysberg M."/>
            <person name="Wallender E.K."/>
            <person name="Wong C."/>
            <person name="Yamamura Y."/>
            <person name="Yuan S."/>
            <person name="Shinozaki K."/>
            <person name="Davis R.W."/>
            <person name="Theologis A."/>
            <person name="Ecker J.R."/>
        </authorList>
    </citation>
    <scope>NUCLEOTIDE SEQUENCE [LARGE SCALE MRNA]</scope>
    <source>
        <strain>cv. Columbia</strain>
    </source>
</reference>
<reference key="6">
    <citation type="journal article" date="2009" name="J. Proteomics">
        <title>Phosphoproteomic analysis of nuclei-enriched fractions from Arabidopsis thaliana.</title>
        <authorList>
            <person name="Jones A.M.E."/>
            <person name="MacLean D."/>
            <person name="Studholme D.J."/>
            <person name="Serna-Sanz A."/>
            <person name="Andreasson E."/>
            <person name="Rathjen J.P."/>
            <person name="Peck S.C."/>
        </authorList>
    </citation>
    <scope>PHOSPHORYLATION [LARGE SCALE ANALYSIS] AT THR-472</scope>
    <scope>IDENTIFICATION BY MASS SPECTROMETRY [LARGE SCALE ANALYSIS]</scope>
    <source>
        <strain>cv. Columbia</strain>
    </source>
</reference>
<protein>
    <recommendedName>
        <fullName>Ammonium transporter 1 member 2</fullName>
        <shortName>AtAMT1;2</shortName>
    </recommendedName>
</protein>
<accession>Q9ZPJ8</accession>
<accession>Q9SQH8</accession>